<gene>
    <name type="ordered locus">ML2569.1</name>
    <name type="ORF">ML2569A</name>
</gene>
<keyword id="KW-1185">Reference proteome</keyword>
<keyword id="KW-0732">Signal</keyword>
<feature type="signal peptide" evidence="1">
    <location>
        <begin position="1"/>
        <end position="32"/>
    </location>
</feature>
<feature type="chain" id="PRO_0000014070" description="Putative secreted protein ML2569.1">
    <location>
        <begin position="33"/>
        <end position="57"/>
    </location>
</feature>
<feature type="region of interest" description="Disordered" evidence="2">
    <location>
        <begin position="34"/>
        <end position="57"/>
    </location>
</feature>
<protein>
    <recommendedName>
        <fullName>Putative secreted protein ML2569.1</fullName>
    </recommendedName>
</protein>
<dbReference type="EMBL" id="AL583926">
    <property type="protein sequence ID" value="CAC32101.1"/>
    <property type="molecule type" value="Genomic_DNA"/>
</dbReference>
<dbReference type="PIR" id="G87230">
    <property type="entry name" value="G87230"/>
</dbReference>
<dbReference type="RefSeq" id="NP_302646.1">
    <property type="nucleotide sequence ID" value="NC_002677.1"/>
</dbReference>
<dbReference type="RefSeq" id="WP_010908965.1">
    <property type="nucleotide sequence ID" value="NC_002677.1"/>
</dbReference>
<dbReference type="SMR" id="Q9CD20"/>
<dbReference type="STRING" id="272631.gene:17576435"/>
<dbReference type="KEGG" id="mle:ML2569A"/>
<dbReference type="PATRIC" id="fig|272631.5.peg.4937"/>
<dbReference type="Leproma" id="ML2569A"/>
<dbReference type="eggNOG" id="ENOG5030NJN">
    <property type="taxonomic scope" value="Bacteria"/>
</dbReference>
<dbReference type="HOGENOM" id="CLU_192074_1_1_11"/>
<dbReference type="OrthoDB" id="4630181at2"/>
<dbReference type="Proteomes" id="UP000000806">
    <property type="component" value="Chromosome"/>
</dbReference>
<dbReference type="InterPro" id="IPR022566">
    <property type="entry name" value="DUF2613"/>
</dbReference>
<dbReference type="Pfam" id="PF11021">
    <property type="entry name" value="DUF2613"/>
    <property type="match status" value="1"/>
</dbReference>
<sequence length="57" mass="5897">MSRIVAPAAASVVVGLLLGAATIFGMTLMVQQDTKPPLPGGDPQSSVLNRVEYGNRT</sequence>
<accession>Q9CD20</accession>
<organism>
    <name type="scientific">Mycobacterium leprae (strain TN)</name>
    <dbReference type="NCBI Taxonomy" id="272631"/>
    <lineage>
        <taxon>Bacteria</taxon>
        <taxon>Bacillati</taxon>
        <taxon>Actinomycetota</taxon>
        <taxon>Actinomycetes</taxon>
        <taxon>Mycobacteriales</taxon>
        <taxon>Mycobacteriaceae</taxon>
        <taxon>Mycobacterium</taxon>
    </lineage>
</organism>
<name>Y256A_MYCLE</name>
<evidence type="ECO:0000255" key="1"/>
<evidence type="ECO:0000256" key="2">
    <source>
        <dbReference type="SAM" id="MobiDB-lite"/>
    </source>
</evidence>
<reference key="1">
    <citation type="journal article" date="2001" name="Nature">
        <title>Massive gene decay in the leprosy bacillus.</title>
        <authorList>
            <person name="Cole S.T."/>
            <person name="Eiglmeier K."/>
            <person name="Parkhill J."/>
            <person name="James K.D."/>
            <person name="Thomson N.R."/>
            <person name="Wheeler P.R."/>
            <person name="Honore N."/>
            <person name="Garnier T."/>
            <person name="Churcher C.M."/>
            <person name="Harris D.E."/>
            <person name="Mungall K.L."/>
            <person name="Basham D."/>
            <person name="Brown D."/>
            <person name="Chillingworth T."/>
            <person name="Connor R."/>
            <person name="Davies R.M."/>
            <person name="Devlin K."/>
            <person name="Duthoy S."/>
            <person name="Feltwell T."/>
            <person name="Fraser A."/>
            <person name="Hamlin N."/>
            <person name="Holroyd S."/>
            <person name="Hornsby T."/>
            <person name="Jagels K."/>
            <person name="Lacroix C."/>
            <person name="Maclean J."/>
            <person name="Moule S."/>
            <person name="Murphy L.D."/>
            <person name="Oliver K."/>
            <person name="Quail M.A."/>
            <person name="Rajandream M.A."/>
            <person name="Rutherford K.M."/>
            <person name="Rutter S."/>
            <person name="Seeger K."/>
            <person name="Simon S."/>
            <person name="Simmonds M."/>
            <person name="Skelton J."/>
            <person name="Squares R."/>
            <person name="Squares S."/>
            <person name="Stevens K."/>
            <person name="Taylor K."/>
            <person name="Whitehead S."/>
            <person name="Woodward J.R."/>
            <person name="Barrell B.G."/>
        </authorList>
    </citation>
    <scope>NUCLEOTIDE SEQUENCE [LARGE SCALE GENOMIC DNA]</scope>
    <source>
        <strain>TN</strain>
    </source>
</reference>
<proteinExistence type="inferred from homology"/>